<dbReference type="EMBL" id="CH477712">
    <property type="protein sequence ID" value="EAT36994.1"/>
    <property type="molecule type" value="Genomic_DNA"/>
</dbReference>
<dbReference type="SMR" id="Q16RF5"/>
<dbReference type="FunCoup" id="Q16RF5">
    <property type="interactions" value="1455"/>
</dbReference>
<dbReference type="STRING" id="7159.Q16RF5"/>
<dbReference type="PaxDb" id="7159-AAEL010968-PA"/>
<dbReference type="EnsemblMetazoa" id="AAEL010968-RA">
    <property type="protein sequence ID" value="AAEL010968-PA"/>
    <property type="gene ID" value="AAEL010968"/>
</dbReference>
<dbReference type="GeneID" id="5574160"/>
<dbReference type="KEGG" id="aag:5574160"/>
<dbReference type="VEuPathDB" id="VectorBase:AAEL010968"/>
<dbReference type="eggNOG" id="KOG3909">
    <property type="taxonomic scope" value="Eukaryota"/>
</dbReference>
<dbReference type="HOGENOM" id="CLU_037350_0_0_1"/>
<dbReference type="InParanoid" id="Q16RF5"/>
<dbReference type="OMA" id="VPHIAHD"/>
<dbReference type="OrthoDB" id="27601at2759"/>
<dbReference type="PhylomeDB" id="Q16RF5"/>
<dbReference type="Proteomes" id="UP000008820">
    <property type="component" value="Chromosome 2"/>
</dbReference>
<dbReference type="Proteomes" id="UP000682892">
    <property type="component" value="Unassembled WGS sequence"/>
</dbReference>
<dbReference type="GO" id="GO:0005737">
    <property type="term" value="C:cytoplasm"/>
    <property type="evidence" value="ECO:0007669"/>
    <property type="project" value="UniProtKB-SubCell"/>
</dbReference>
<dbReference type="GO" id="GO:0046872">
    <property type="term" value="F:metal ion binding"/>
    <property type="evidence" value="ECO:0007669"/>
    <property type="project" value="UniProtKB-KW"/>
</dbReference>
<dbReference type="GO" id="GO:0008479">
    <property type="term" value="F:tRNA-guanosine(34) queuine transglycosylase activity"/>
    <property type="evidence" value="ECO:0007669"/>
    <property type="project" value="UniProtKB-UniRule"/>
</dbReference>
<dbReference type="GO" id="GO:0101030">
    <property type="term" value="P:tRNA-guanine transglycosylation"/>
    <property type="evidence" value="ECO:0007669"/>
    <property type="project" value="UniProtKB-UniRule"/>
</dbReference>
<dbReference type="Gene3D" id="3.20.20.105">
    <property type="entry name" value="Queuine tRNA-ribosyltransferase-like"/>
    <property type="match status" value="1"/>
</dbReference>
<dbReference type="HAMAP" id="MF_03043">
    <property type="entry name" value="QTRT2"/>
    <property type="match status" value="1"/>
</dbReference>
<dbReference type="InterPro" id="IPR028592">
    <property type="entry name" value="QTRTD1"/>
</dbReference>
<dbReference type="InterPro" id="IPR050852">
    <property type="entry name" value="Queuine_tRNA-ribosyltrfase"/>
</dbReference>
<dbReference type="InterPro" id="IPR036511">
    <property type="entry name" value="TGT-like_sf"/>
</dbReference>
<dbReference type="InterPro" id="IPR002616">
    <property type="entry name" value="tRNA_ribo_trans-like"/>
</dbReference>
<dbReference type="NCBIfam" id="TIGR00449">
    <property type="entry name" value="tgt_general"/>
    <property type="match status" value="1"/>
</dbReference>
<dbReference type="PANTHER" id="PTHR46064">
    <property type="entry name" value="QUEUINE TRNA-RIBOSYLTRANSFERASE ACCESSORY SUBUNIT 2"/>
    <property type="match status" value="1"/>
</dbReference>
<dbReference type="PANTHER" id="PTHR46064:SF1">
    <property type="entry name" value="QUEUINE TRNA-RIBOSYLTRANSFERASE ACCESSORY SUBUNIT 2"/>
    <property type="match status" value="1"/>
</dbReference>
<dbReference type="Pfam" id="PF01702">
    <property type="entry name" value="TGT"/>
    <property type="match status" value="1"/>
</dbReference>
<dbReference type="SUPFAM" id="SSF51713">
    <property type="entry name" value="tRNA-guanine transglycosylase"/>
    <property type="match status" value="1"/>
</dbReference>
<evidence type="ECO:0000255" key="1">
    <source>
        <dbReference type="HAMAP-Rule" id="MF_03043"/>
    </source>
</evidence>
<sequence length="421" mass="47660">MKFAIESVSKCSGRLGTLNVKNAFSNVSISTPALVLHAKGGSIPFLSREVLQYLTAETPIMQHSLTNTDHMEEAVRACDEGISSFVGHKESISLLVLKDPAEQCKPSFHEKDFVPIFSRSGRKNFTSERYMQLVEAFKPTVFVPLFDGDTDLESSKKRLQKSLDRTEKFVEQCVEAHRKSANLKESNLIGPVVGGYNLKLRSASVKFLEQFKNDLEGYMIAGLHSNGLSATELKESNLVEVVSHTCQSLPTDKVRFMFGAFSPRIILKLVAQGIDVFDTSFAYLKTQQNRALTFSFDVNDKNVDSRETELDIRDPRWAEEFTGFVESCSCLACTKHTKAYAHHLYNTREMLAPIILMMHNLHHYFEFFKAIRKHVSEDTLDQLVEHLQKQKDVPLFDEKSVDVTKADPMDFRDSATKKLKV</sequence>
<reference key="1">
    <citation type="journal article" date="2007" name="Science">
        <title>Genome sequence of Aedes aegypti, a major arbovirus vector.</title>
        <authorList>
            <person name="Nene V."/>
            <person name="Wortman J.R."/>
            <person name="Lawson D."/>
            <person name="Haas B.J."/>
            <person name="Kodira C.D."/>
            <person name="Tu Z.J."/>
            <person name="Loftus B.J."/>
            <person name="Xi Z."/>
            <person name="Megy K."/>
            <person name="Grabherr M."/>
            <person name="Ren Q."/>
            <person name="Zdobnov E.M."/>
            <person name="Lobo N.F."/>
            <person name="Campbell K.S."/>
            <person name="Brown S.E."/>
            <person name="Bonaldo M.F."/>
            <person name="Zhu J."/>
            <person name="Sinkins S.P."/>
            <person name="Hogenkamp D.G."/>
            <person name="Amedeo P."/>
            <person name="Arensburger P."/>
            <person name="Atkinson P.W."/>
            <person name="Bidwell S.L."/>
            <person name="Biedler J."/>
            <person name="Birney E."/>
            <person name="Bruggner R.V."/>
            <person name="Costas J."/>
            <person name="Coy M.R."/>
            <person name="Crabtree J."/>
            <person name="Crawford M."/>
            <person name="DeBruyn B."/>
            <person name="DeCaprio D."/>
            <person name="Eiglmeier K."/>
            <person name="Eisenstadt E."/>
            <person name="El-Dorry H."/>
            <person name="Gelbart W.M."/>
            <person name="Gomes S.L."/>
            <person name="Hammond M."/>
            <person name="Hannick L.I."/>
            <person name="Hogan J.R."/>
            <person name="Holmes M.H."/>
            <person name="Jaffe D."/>
            <person name="Johnston S.J."/>
            <person name="Kennedy R.C."/>
            <person name="Koo H."/>
            <person name="Kravitz S."/>
            <person name="Kriventseva E.V."/>
            <person name="Kulp D."/>
            <person name="Labutti K."/>
            <person name="Lee E."/>
            <person name="Li S."/>
            <person name="Lovin D.D."/>
            <person name="Mao C."/>
            <person name="Mauceli E."/>
            <person name="Menck C.F."/>
            <person name="Miller J.R."/>
            <person name="Montgomery P."/>
            <person name="Mori A."/>
            <person name="Nascimento A.L."/>
            <person name="Naveira H.F."/>
            <person name="Nusbaum C."/>
            <person name="O'Leary S.B."/>
            <person name="Orvis J."/>
            <person name="Pertea M."/>
            <person name="Quesneville H."/>
            <person name="Reidenbach K.R."/>
            <person name="Rogers Y.-H.C."/>
            <person name="Roth C.W."/>
            <person name="Schneider J.R."/>
            <person name="Schatz M."/>
            <person name="Shumway M."/>
            <person name="Stanke M."/>
            <person name="Stinson E.O."/>
            <person name="Tubio J.M.C."/>
            <person name="Vanzee J.P."/>
            <person name="Verjovski-Almeida S."/>
            <person name="Werner D."/>
            <person name="White O.R."/>
            <person name="Wyder S."/>
            <person name="Zeng Q."/>
            <person name="Zhao Q."/>
            <person name="Zhao Y."/>
            <person name="Hill C.A."/>
            <person name="Raikhel A.S."/>
            <person name="Soares M.B."/>
            <person name="Knudson D.L."/>
            <person name="Lee N.H."/>
            <person name="Galagan J."/>
            <person name="Salzberg S.L."/>
            <person name="Paulsen I.T."/>
            <person name="Dimopoulos G."/>
            <person name="Collins F.H."/>
            <person name="Bruce B."/>
            <person name="Fraser-Liggett C.M."/>
            <person name="Severson D.W."/>
        </authorList>
    </citation>
    <scope>NUCLEOTIDE SEQUENCE [LARGE SCALE GENOMIC DNA]</scope>
    <source>
        <strain>LVPib12</strain>
    </source>
</reference>
<feature type="chain" id="PRO_0000383930" description="Queuine tRNA-ribosyltransferase accessory subunit 2">
    <location>
        <begin position="1"/>
        <end position="421"/>
    </location>
</feature>
<feature type="binding site" evidence="1">
    <location>
        <position position="328"/>
    </location>
    <ligand>
        <name>Zn(2+)</name>
        <dbReference type="ChEBI" id="CHEBI:29105"/>
    </ligand>
</feature>
<feature type="binding site" evidence="1">
    <location>
        <position position="330"/>
    </location>
    <ligand>
        <name>Zn(2+)</name>
        <dbReference type="ChEBI" id="CHEBI:29105"/>
    </ligand>
</feature>
<feature type="binding site" evidence="1">
    <location>
        <position position="333"/>
    </location>
    <ligand>
        <name>Zn(2+)</name>
        <dbReference type="ChEBI" id="CHEBI:29105"/>
    </ligand>
</feature>
<feature type="binding site" evidence="1">
    <location>
        <position position="359"/>
    </location>
    <ligand>
        <name>Zn(2+)</name>
        <dbReference type="ChEBI" id="CHEBI:29105"/>
    </ligand>
</feature>
<comment type="function">
    <text evidence="1">Non-catalytic subunit of the queuine tRNA-ribosyltransferase (TGT) that catalyzes the base-exchange of a guanine (G) residue with queuine (Q) at position 34 (anticodon wobble position) in tRNAs with GU(N) anticodons (tRNA-Asp, -Asn, -His and -Tyr), resulting in the hypermodified nucleoside queuosine (7-(((4,5-cis-dihydroxy-2-cyclopenten-1-yl)amino)methyl)-7-deazaguanosine).</text>
</comment>
<comment type="cofactor">
    <cofactor evidence="1">
        <name>Zn(2+)</name>
        <dbReference type="ChEBI" id="CHEBI:29105"/>
    </cofactor>
    <text evidence="1">Binds 1 zinc ion per subunit.</text>
</comment>
<comment type="subunit">
    <text evidence="1">Heterodimer of a catalytic subunit and an accessory subunit.</text>
</comment>
<comment type="subcellular location">
    <subcellularLocation>
        <location evidence="1">Cytoplasm</location>
    </subcellularLocation>
</comment>
<comment type="similarity">
    <text evidence="1">Belongs to the queuine tRNA-ribosyltransferase family. QTRT2 subfamily.</text>
</comment>
<protein>
    <recommendedName>
        <fullName evidence="1">Queuine tRNA-ribosyltransferase accessory subunit 2</fullName>
    </recommendedName>
    <alternativeName>
        <fullName evidence="1">Queuine tRNA-ribosyltransferase domain-containing protein 1</fullName>
    </alternativeName>
</protein>
<accession>Q16RF5</accession>
<keyword id="KW-0963">Cytoplasm</keyword>
<keyword id="KW-0479">Metal-binding</keyword>
<keyword id="KW-1185">Reference proteome</keyword>
<keyword id="KW-0819">tRNA processing</keyword>
<keyword id="KW-0862">Zinc</keyword>
<name>QTRT2_AEDAE</name>
<proteinExistence type="inferred from homology"/>
<gene>
    <name type="ORF">AAEL010968</name>
</gene>
<organism>
    <name type="scientific">Aedes aegypti</name>
    <name type="common">Yellowfever mosquito</name>
    <name type="synonym">Culex aegypti</name>
    <dbReference type="NCBI Taxonomy" id="7159"/>
    <lineage>
        <taxon>Eukaryota</taxon>
        <taxon>Metazoa</taxon>
        <taxon>Ecdysozoa</taxon>
        <taxon>Arthropoda</taxon>
        <taxon>Hexapoda</taxon>
        <taxon>Insecta</taxon>
        <taxon>Pterygota</taxon>
        <taxon>Neoptera</taxon>
        <taxon>Endopterygota</taxon>
        <taxon>Diptera</taxon>
        <taxon>Nematocera</taxon>
        <taxon>Culicoidea</taxon>
        <taxon>Culicidae</taxon>
        <taxon>Culicinae</taxon>
        <taxon>Aedini</taxon>
        <taxon>Aedes</taxon>
        <taxon>Stegomyia</taxon>
    </lineage>
</organism>